<comment type="function">
    <text evidence="3 5 6 7">Transcription factor which regulates the expression of genes involved in lipid metabolism in response to nutrient availability (PubMed:23604316, PubMed:29113111). Binds to the E-box motif 5'-CACGTG-3' (PubMed:19632181). Under well-fed conditions, binds to the promoter and represses the expression of lipase genes lipl-1, lipl-2, lipl-3 and to a lesser extent lipl-5, thereby preventing lipolysis (PubMed:23604316). In response to a high-glucose diet, promotes fatty acid synthesis, elongation and desaturation by up-regulating transcription factor sbp-1 expression (PubMed:29113111). Under well-fed conditions, acts remotely in the intestine to up-regulate the expression of chemoreceptor srh-234 gene in the ADL sensory neuron, possibly by regulating the insulin signaling pathway (PubMed:27487365).</text>
</comment>
<comment type="subunit">
    <text evidence="3 4">May form homodimer (PubMed:19632181). Interacts (via N-terminus) with skn-1 isoforms a and c (PubMed:23040073).</text>
</comment>
<comment type="subcellular location">
    <subcellularLocation>
        <location evidence="5 7">Nucleus</location>
    </subcellularLocation>
    <subcellularLocation>
        <location evidence="7">Cytoplasm</location>
    </subcellularLocation>
    <text evidence="7">In response to nutrient levels, shuttles between the cytoplasm and the nucleus (PubMed:29113111). Localizes to the nucleus in response to high glucose levels (PubMed:29113111).</text>
</comment>
<comment type="tissue specificity">
    <text evidence="5">Expressed in the intestine and in the AWC sensory neurons.</text>
</comment>
<comment type="induction">
    <text evidence="5">Down-regulated by fasting.</text>
</comment>
<comment type="disruption phenotype">
    <text evidence="5">RNAi-mediated knockdown causes a depletion of fat stores. RNAi-mediated knockdown in the intestine causes a fasting-like transcriptional response, characterized by the up-regulation of the lipl-1 gene transcription.</text>
</comment>
<comment type="similarity">
    <text evidence="9">Belongs to the MAX family.</text>
</comment>
<reference evidence="10" key="1">
    <citation type="journal article" date="1998" name="Science">
        <title>Genome sequence of the nematode C. elegans: a platform for investigating biology.</title>
        <authorList>
            <consortium name="The C. elegans sequencing consortium"/>
        </authorList>
    </citation>
    <scope>NUCLEOTIDE SEQUENCE [LARGE SCALE GENOMIC DNA]</scope>
    <source>
        <strain evidence="10">Bristol N2</strain>
    </source>
</reference>
<reference evidence="9" key="2">
    <citation type="journal article" date="2009" name="Cell">
        <title>A multiparameter network reveals extensive divergence between C. elegans bHLH transcription factors.</title>
        <authorList>
            <person name="Grove C.A."/>
            <person name="De Masi F."/>
            <person name="Barrasa M.I."/>
            <person name="Newburger D.E."/>
            <person name="Alkema M.J."/>
            <person name="Bulyk M.L."/>
            <person name="Walhout A.J.M."/>
        </authorList>
    </citation>
    <scope>FUNCTION</scope>
    <scope>SUBUNIT</scope>
</reference>
<reference evidence="9" key="3">
    <citation type="journal article" date="2012" name="Cell Metab.">
        <title>Mitochondrial SKN-1/Nrf mediates a conserved starvation response.</title>
        <authorList>
            <person name="Paek J."/>
            <person name="Lo J.Y."/>
            <person name="Narasimhan S.D."/>
            <person name="Nguyen T.N."/>
            <person name="Glover-Cutter K."/>
            <person name="Robida-Stubbs S."/>
            <person name="Suzuki T."/>
            <person name="Yamamoto M."/>
            <person name="Blackwell T.K."/>
            <person name="Curran S.P."/>
        </authorList>
    </citation>
    <scope>INTERACTION WITH SKN-1</scope>
</reference>
<reference evidence="9" key="4">
    <citation type="journal article" date="2013" name="Nat. Cell Biol.">
        <title>MXL-3 and HLH-30 transcriptionally link lipolysis and autophagy to nutrient availability.</title>
        <authorList>
            <person name="O'Rourke E.J."/>
            <person name="Ruvkun G."/>
        </authorList>
    </citation>
    <scope>FUNCTION</scope>
    <scope>SUBCELLULAR LOCATION</scope>
    <scope>TISSUE SPECIFICITY</scope>
    <scope>INDUCTION</scope>
    <scope>DISRUPTION PHENOTYPE</scope>
</reference>
<reference evidence="9" key="5">
    <citation type="journal article" date="2016" name="PLoS Genet.">
        <title>Cell-Autonomous and Non-Cell-Autonomous Regulation of a Feeding State-Dependent Chemoreceptor Gene via MEF-2 and bHLH Transcription Factors.</title>
        <authorList>
            <person name="Gruner M."/>
            <person name="Grubbs J."/>
            <person name="McDonagh A."/>
            <person name="Valdes D."/>
            <person name="Winbush A."/>
            <person name="van der Linden A.M."/>
        </authorList>
    </citation>
    <scope>FUNCTION</scope>
</reference>
<reference evidence="9" key="6">
    <citation type="journal article" date="2017" name="Genes (Basel)">
        <title>The MXL-3/SBP-1 Axis Is Responsible for Glucose-Dependent Fat Accumulation in C. elegans.</title>
        <authorList>
            <person name="Mejia-Martinez F."/>
            <person name="Franco-Juarez B."/>
            <person name="Moreno-Arriola E."/>
            <person name="Hernandez-Vazquez A."/>
            <person name="Martinez-Avila M."/>
            <person name="Gomez-Manzo S."/>
            <person name="Marcial-Quino J."/>
            <person name="Carvajal K."/>
            <person name="Velazquez-Arellano A."/>
            <person name="Ortega-Cuellar D."/>
        </authorList>
    </citation>
    <scope>FUNCTION</scope>
    <scope>SUBCELLULAR LOCATION</scope>
</reference>
<protein>
    <recommendedName>
        <fullName evidence="9">Protein mxl-3</fullName>
    </recommendedName>
    <alternativeName>
        <fullName evidence="8">Basic-helix-loop-helix transcription factor 3</fullName>
    </alternativeName>
    <alternativeName>
        <fullName evidence="11">Max-like protein 3</fullName>
    </alternativeName>
</protein>
<keyword id="KW-0010">Activator</keyword>
<keyword id="KW-0963">Cytoplasm</keyword>
<keyword id="KW-0238">DNA-binding</keyword>
<keyword id="KW-0539">Nucleus</keyword>
<keyword id="KW-1185">Reference proteome</keyword>
<keyword id="KW-0678">Repressor</keyword>
<keyword id="KW-0804">Transcription</keyword>
<keyword id="KW-0805">Transcription regulation</keyword>
<gene>
    <name evidence="11" type="primary">mxl-3</name>
    <name evidence="11" type="synonym">hlh-23</name>
    <name evidence="11" type="ORF">F46G10.6</name>
</gene>
<feature type="chain" id="PRO_0000449317" description="Protein mxl-3">
    <location>
        <begin position="1"/>
        <end position="235"/>
    </location>
</feature>
<feature type="domain" description="bHLH" evidence="1">
    <location>
        <begin position="47"/>
        <end position="98"/>
    </location>
</feature>
<feature type="region of interest" description="Disordered" evidence="2">
    <location>
        <begin position="18"/>
        <end position="49"/>
    </location>
</feature>
<feature type="region of interest" description="Basic motif" evidence="1">
    <location>
        <begin position="47"/>
        <end position="60"/>
    </location>
</feature>
<feature type="region of interest" description="Helix-loop-helix motif" evidence="1">
    <location>
        <begin position="61"/>
        <end position="98"/>
    </location>
</feature>
<dbReference type="EMBL" id="BX284606">
    <property type="protein sequence ID" value="CAA94125.1"/>
    <property type="molecule type" value="Genomic_DNA"/>
</dbReference>
<dbReference type="PIR" id="T20079">
    <property type="entry name" value="T20079"/>
</dbReference>
<dbReference type="RefSeq" id="NP_510223.1">
    <property type="nucleotide sequence ID" value="NM_077822.7"/>
</dbReference>
<dbReference type="SMR" id="Q18711"/>
<dbReference type="FunCoup" id="Q18711">
    <property type="interactions" value="99"/>
</dbReference>
<dbReference type="IntAct" id="Q18711">
    <property type="interactions" value="11"/>
</dbReference>
<dbReference type="STRING" id="6239.F46G10.6.1"/>
<dbReference type="PaxDb" id="6239-F46G10.6"/>
<dbReference type="EnsemblMetazoa" id="F46G10.6.1">
    <property type="protein sequence ID" value="F46G10.6.1"/>
    <property type="gene ID" value="WBGene00003511"/>
</dbReference>
<dbReference type="GeneID" id="181457"/>
<dbReference type="KEGG" id="cel:CELE_F46G10.6"/>
<dbReference type="UCSC" id="F46G10.6">
    <property type="organism name" value="c. elegans"/>
</dbReference>
<dbReference type="AGR" id="WB:WBGene00003511"/>
<dbReference type="CTD" id="181457"/>
<dbReference type="WormBase" id="F46G10.6">
    <property type="protein sequence ID" value="CE05882"/>
    <property type="gene ID" value="WBGene00003511"/>
    <property type="gene designation" value="mxl-3"/>
</dbReference>
<dbReference type="eggNOG" id="KOG2483">
    <property type="taxonomic scope" value="Eukaryota"/>
</dbReference>
<dbReference type="GeneTree" id="ENSGT00530000064011"/>
<dbReference type="HOGENOM" id="CLU_1181134_0_0_1"/>
<dbReference type="InParanoid" id="Q18711"/>
<dbReference type="OMA" id="HFVILKD"/>
<dbReference type="OrthoDB" id="8964853at2759"/>
<dbReference type="SignaLink" id="Q18711"/>
<dbReference type="PRO" id="PR:Q18711"/>
<dbReference type="Proteomes" id="UP000001940">
    <property type="component" value="Chromosome X"/>
</dbReference>
<dbReference type="Bgee" id="WBGene00003511">
    <property type="expression patterns" value="Expressed in larva and 3 other cell types or tissues"/>
</dbReference>
<dbReference type="GO" id="GO:0005737">
    <property type="term" value="C:cytoplasm"/>
    <property type="evidence" value="ECO:0000314"/>
    <property type="project" value="UniProtKB"/>
</dbReference>
<dbReference type="GO" id="GO:0005634">
    <property type="term" value="C:nucleus"/>
    <property type="evidence" value="ECO:0000314"/>
    <property type="project" value="UniProtKB"/>
</dbReference>
<dbReference type="GO" id="GO:0090575">
    <property type="term" value="C:RNA polymerase II transcription regulator complex"/>
    <property type="evidence" value="ECO:0000318"/>
    <property type="project" value="GO_Central"/>
</dbReference>
<dbReference type="GO" id="GO:0003700">
    <property type="term" value="F:DNA-binding transcription factor activity"/>
    <property type="evidence" value="ECO:0000314"/>
    <property type="project" value="WormBase"/>
</dbReference>
<dbReference type="GO" id="GO:0046983">
    <property type="term" value="F:protein dimerization activity"/>
    <property type="evidence" value="ECO:0007669"/>
    <property type="project" value="InterPro"/>
</dbReference>
<dbReference type="GO" id="GO:0000977">
    <property type="term" value="F:RNA polymerase II transcription regulatory region sequence-specific DNA binding"/>
    <property type="evidence" value="ECO:0000314"/>
    <property type="project" value="WormBase"/>
</dbReference>
<dbReference type="GO" id="GO:0008286">
    <property type="term" value="P:insulin receptor signaling pathway"/>
    <property type="evidence" value="ECO:0000315"/>
    <property type="project" value="UniProtKB"/>
</dbReference>
<dbReference type="GO" id="GO:0045944">
    <property type="term" value="P:positive regulation of transcription by RNA polymerase II"/>
    <property type="evidence" value="ECO:0000315"/>
    <property type="project" value="UniProtKB"/>
</dbReference>
<dbReference type="GO" id="GO:0042304">
    <property type="term" value="P:regulation of fatty acid biosynthetic process"/>
    <property type="evidence" value="ECO:0000315"/>
    <property type="project" value="UniProtKB"/>
</dbReference>
<dbReference type="GO" id="GO:0006357">
    <property type="term" value="P:regulation of transcription by RNA polymerase II"/>
    <property type="evidence" value="ECO:0000314"/>
    <property type="project" value="WormBase"/>
</dbReference>
<dbReference type="GO" id="GO:0032094">
    <property type="term" value="P:response to food"/>
    <property type="evidence" value="ECO:0000315"/>
    <property type="project" value="UniProtKB"/>
</dbReference>
<dbReference type="CDD" id="cd11406">
    <property type="entry name" value="bHLHzip_Max"/>
    <property type="match status" value="1"/>
</dbReference>
<dbReference type="FunFam" id="4.10.280.10:FF:000019">
    <property type="entry name" value="Myc proto-oncogene protein"/>
    <property type="match status" value="1"/>
</dbReference>
<dbReference type="Gene3D" id="4.10.280.10">
    <property type="entry name" value="Helix-loop-helix DNA-binding domain"/>
    <property type="match status" value="1"/>
</dbReference>
<dbReference type="InterPro" id="IPR011598">
    <property type="entry name" value="bHLH_dom"/>
</dbReference>
<dbReference type="InterPro" id="IPR036638">
    <property type="entry name" value="HLH_DNA-bd_sf"/>
</dbReference>
<dbReference type="PANTHER" id="PTHR10328:SF3">
    <property type="entry name" value="PROTEIN MAX"/>
    <property type="match status" value="1"/>
</dbReference>
<dbReference type="PANTHER" id="PTHR10328">
    <property type="entry name" value="PROTEIN MAX MYC-ASSOCIATED FACTOR X"/>
    <property type="match status" value="1"/>
</dbReference>
<dbReference type="Pfam" id="PF00010">
    <property type="entry name" value="HLH"/>
    <property type="match status" value="1"/>
</dbReference>
<dbReference type="SMART" id="SM00353">
    <property type="entry name" value="HLH"/>
    <property type="match status" value="1"/>
</dbReference>
<dbReference type="SUPFAM" id="SSF47459">
    <property type="entry name" value="HLH, helix-loop-helix DNA-binding domain"/>
    <property type="match status" value="1"/>
</dbReference>
<dbReference type="PROSITE" id="PS50888">
    <property type="entry name" value="BHLH"/>
    <property type="match status" value="1"/>
</dbReference>
<proteinExistence type="evidence at protein level"/>
<accession>Q18711</accession>
<sequence length="235" mass="26040">MSAIVEDMYLLSSSMKMEKQFRKRHHSDSSDDDSSSPKSASPSMDDDRRAHHNELERRRRDHIKDHFTILKDAIPLLDGEKSSRALILKRAVEFIHVMQTKLSSQGKAIEDLTRKNELLEERLLERESSGSPSSSRLPALAVSSSQMQLTMPIIPQMQNIAQLSQYPQQANIIAQSTNPAQLDGLIALNNDAILALLGSFQSVSPSLLDSAPGTPPSGFYPCAFSPVDQQMAVKI</sequence>
<name>MXL3_CAEEL</name>
<evidence type="ECO:0000255" key="1">
    <source>
        <dbReference type="PROSITE-ProRule" id="PRU00981"/>
    </source>
</evidence>
<evidence type="ECO:0000256" key="2">
    <source>
        <dbReference type="SAM" id="MobiDB-lite"/>
    </source>
</evidence>
<evidence type="ECO:0000269" key="3">
    <source>
    </source>
</evidence>
<evidence type="ECO:0000269" key="4">
    <source>
    </source>
</evidence>
<evidence type="ECO:0000269" key="5">
    <source>
    </source>
</evidence>
<evidence type="ECO:0000269" key="6">
    <source>
    </source>
</evidence>
<evidence type="ECO:0000269" key="7">
    <source>
    </source>
</evidence>
<evidence type="ECO:0000303" key="8">
    <source>
    </source>
</evidence>
<evidence type="ECO:0000305" key="9"/>
<evidence type="ECO:0000312" key="10">
    <source>
        <dbReference type="Proteomes" id="UP000001940"/>
    </source>
</evidence>
<evidence type="ECO:0000312" key="11">
    <source>
        <dbReference type="WormBase" id="F46G10.6"/>
    </source>
</evidence>
<organism evidence="10">
    <name type="scientific">Caenorhabditis elegans</name>
    <dbReference type="NCBI Taxonomy" id="6239"/>
    <lineage>
        <taxon>Eukaryota</taxon>
        <taxon>Metazoa</taxon>
        <taxon>Ecdysozoa</taxon>
        <taxon>Nematoda</taxon>
        <taxon>Chromadorea</taxon>
        <taxon>Rhabditida</taxon>
        <taxon>Rhabditina</taxon>
        <taxon>Rhabditomorpha</taxon>
        <taxon>Rhabditoidea</taxon>
        <taxon>Rhabditidae</taxon>
        <taxon>Peloderinae</taxon>
        <taxon>Caenorhabditis</taxon>
    </lineage>
</organism>